<name>URE2_METSB</name>
<evidence type="ECO:0000255" key="1">
    <source>
        <dbReference type="HAMAP-Rule" id="MF_01954"/>
    </source>
</evidence>
<feature type="chain" id="PRO_1000188929" description="Urease subunit beta">
    <location>
        <begin position="1"/>
        <end position="104"/>
    </location>
</feature>
<organism>
    <name type="scientific">Methylocella silvestris (strain DSM 15510 / CIP 108128 / LMG 27833 / NCIMB 13906 / BL2)</name>
    <dbReference type="NCBI Taxonomy" id="395965"/>
    <lineage>
        <taxon>Bacteria</taxon>
        <taxon>Pseudomonadati</taxon>
        <taxon>Pseudomonadota</taxon>
        <taxon>Alphaproteobacteria</taxon>
        <taxon>Hyphomicrobiales</taxon>
        <taxon>Beijerinckiaceae</taxon>
        <taxon>Methylocella</taxon>
    </lineage>
</organism>
<accession>B8EPV0</accession>
<comment type="catalytic activity">
    <reaction evidence="1">
        <text>urea + 2 H2O + H(+) = hydrogencarbonate + 2 NH4(+)</text>
        <dbReference type="Rhea" id="RHEA:20557"/>
        <dbReference type="ChEBI" id="CHEBI:15377"/>
        <dbReference type="ChEBI" id="CHEBI:15378"/>
        <dbReference type="ChEBI" id="CHEBI:16199"/>
        <dbReference type="ChEBI" id="CHEBI:17544"/>
        <dbReference type="ChEBI" id="CHEBI:28938"/>
        <dbReference type="EC" id="3.5.1.5"/>
    </reaction>
</comment>
<comment type="pathway">
    <text evidence="1">Nitrogen metabolism; urea degradation; CO(2) and NH(3) from urea (urease route): step 1/1.</text>
</comment>
<comment type="subunit">
    <text evidence="1">Heterotrimer of UreA (gamma), UreB (beta) and UreC (alpha) subunits. Three heterotrimers associate to form the active enzyme.</text>
</comment>
<comment type="subcellular location">
    <subcellularLocation>
        <location evidence="1">Cytoplasm</location>
    </subcellularLocation>
</comment>
<comment type="similarity">
    <text evidence="1">Belongs to the urease beta subunit family.</text>
</comment>
<sequence>MIPGEIIVAEGDITLNADRDAITLNVANLGDRPIQVGSHYHFAETNAALSFDRAATLGRRLDIAAGTAVRFEPGQTREVALVPFAGAREVFGFSGAVMGKLDKD</sequence>
<dbReference type="EC" id="3.5.1.5" evidence="1"/>
<dbReference type="EMBL" id="CP001280">
    <property type="protein sequence ID" value="ACK50954.1"/>
    <property type="molecule type" value="Genomic_DNA"/>
</dbReference>
<dbReference type="RefSeq" id="WP_012591024.1">
    <property type="nucleotide sequence ID" value="NC_011666.1"/>
</dbReference>
<dbReference type="SMR" id="B8EPV0"/>
<dbReference type="STRING" id="395965.Msil_2012"/>
<dbReference type="KEGG" id="msl:Msil_2012"/>
<dbReference type="eggNOG" id="COG0832">
    <property type="taxonomic scope" value="Bacteria"/>
</dbReference>
<dbReference type="HOGENOM" id="CLU_129707_1_1_5"/>
<dbReference type="OrthoDB" id="9797217at2"/>
<dbReference type="UniPathway" id="UPA00258">
    <property type="reaction ID" value="UER00370"/>
</dbReference>
<dbReference type="Proteomes" id="UP000002257">
    <property type="component" value="Chromosome"/>
</dbReference>
<dbReference type="GO" id="GO:0035550">
    <property type="term" value="C:urease complex"/>
    <property type="evidence" value="ECO:0007669"/>
    <property type="project" value="InterPro"/>
</dbReference>
<dbReference type="GO" id="GO:0009039">
    <property type="term" value="F:urease activity"/>
    <property type="evidence" value="ECO:0007669"/>
    <property type="project" value="UniProtKB-UniRule"/>
</dbReference>
<dbReference type="GO" id="GO:0043419">
    <property type="term" value="P:urea catabolic process"/>
    <property type="evidence" value="ECO:0007669"/>
    <property type="project" value="UniProtKB-UniRule"/>
</dbReference>
<dbReference type="CDD" id="cd00407">
    <property type="entry name" value="Urease_beta"/>
    <property type="match status" value="1"/>
</dbReference>
<dbReference type="FunFam" id="2.10.150.10:FF:000001">
    <property type="entry name" value="Urease subunit beta"/>
    <property type="match status" value="1"/>
</dbReference>
<dbReference type="Gene3D" id="2.10.150.10">
    <property type="entry name" value="Urease, beta subunit"/>
    <property type="match status" value="1"/>
</dbReference>
<dbReference type="HAMAP" id="MF_01954">
    <property type="entry name" value="Urease_beta"/>
    <property type="match status" value="1"/>
</dbReference>
<dbReference type="InterPro" id="IPR002019">
    <property type="entry name" value="Urease_beta-like"/>
</dbReference>
<dbReference type="InterPro" id="IPR036461">
    <property type="entry name" value="Urease_betasu_sf"/>
</dbReference>
<dbReference type="InterPro" id="IPR050069">
    <property type="entry name" value="Urease_subunit"/>
</dbReference>
<dbReference type="NCBIfam" id="NF009682">
    <property type="entry name" value="PRK13203.1"/>
    <property type="match status" value="1"/>
</dbReference>
<dbReference type="NCBIfam" id="TIGR00192">
    <property type="entry name" value="urease_beta"/>
    <property type="match status" value="1"/>
</dbReference>
<dbReference type="PANTHER" id="PTHR33569">
    <property type="entry name" value="UREASE"/>
    <property type="match status" value="1"/>
</dbReference>
<dbReference type="PANTHER" id="PTHR33569:SF1">
    <property type="entry name" value="UREASE"/>
    <property type="match status" value="1"/>
</dbReference>
<dbReference type="Pfam" id="PF00699">
    <property type="entry name" value="Urease_beta"/>
    <property type="match status" value="1"/>
</dbReference>
<dbReference type="SUPFAM" id="SSF51278">
    <property type="entry name" value="Urease, beta-subunit"/>
    <property type="match status" value="1"/>
</dbReference>
<proteinExistence type="inferred from homology"/>
<gene>
    <name evidence="1" type="primary">ureB</name>
    <name type="ordered locus">Msil_2012</name>
</gene>
<protein>
    <recommendedName>
        <fullName evidence="1">Urease subunit beta</fullName>
        <ecNumber evidence="1">3.5.1.5</ecNumber>
    </recommendedName>
    <alternativeName>
        <fullName evidence="1">Urea amidohydrolase subunit beta</fullName>
    </alternativeName>
</protein>
<keyword id="KW-0963">Cytoplasm</keyword>
<keyword id="KW-0378">Hydrolase</keyword>
<keyword id="KW-1185">Reference proteome</keyword>
<reference key="1">
    <citation type="journal article" date="2010" name="J. Bacteriol.">
        <title>Complete genome sequence of the aerobic facultative methanotroph Methylocella silvestris BL2.</title>
        <authorList>
            <person name="Chen Y."/>
            <person name="Crombie A."/>
            <person name="Rahman M.T."/>
            <person name="Dedysh S.N."/>
            <person name="Liesack W."/>
            <person name="Stott M.B."/>
            <person name="Alam M."/>
            <person name="Theisen A.R."/>
            <person name="Murrell J.C."/>
            <person name="Dunfield P.F."/>
        </authorList>
    </citation>
    <scope>NUCLEOTIDE SEQUENCE [LARGE SCALE GENOMIC DNA]</scope>
    <source>
        <strain>DSM 15510 / CIP 108128 / LMG 27833 / NCIMB 13906 / BL2</strain>
    </source>
</reference>